<accession>B0CE31</accession>
<reference key="1">
    <citation type="journal article" date="2008" name="Proc. Natl. Acad. Sci. U.S.A.">
        <title>Niche adaptation and genome expansion in the chlorophyll d-producing cyanobacterium Acaryochloris marina.</title>
        <authorList>
            <person name="Swingley W.D."/>
            <person name="Chen M."/>
            <person name="Cheung P.C."/>
            <person name="Conrad A.L."/>
            <person name="Dejesa L.C."/>
            <person name="Hao J."/>
            <person name="Honchak B.M."/>
            <person name="Karbach L.E."/>
            <person name="Kurdoglu A."/>
            <person name="Lahiri S."/>
            <person name="Mastrian S.D."/>
            <person name="Miyashita H."/>
            <person name="Page L."/>
            <person name="Ramakrishna P."/>
            <person name="Satoh S."/>
            <person name="Sattley W.M."/>
            <person name="Shimada Y."/>
            <person name="Taylor H.L."/>
            <person name="Tomo T."/>
            <person name="Tsuchiya T."/>
            <person name="Wang Z.T."/>
            <person name="Raymond J."/>
            <person name="Mimuro M."/>
            <person name="Blankenship R.E."/>
            <person name="Touchman J.W."/>
        </authorList>
    </citation>
    <scope>NUCLEOTIDE SEQUENCE [LARGE SCALE GENOMIC DNA]</scope>
    <source>
        <strain>MBIC 11017</strain>
    </source>
</reference>
<comment type="function">
    <text evidence="1">Catalyzes the conversion of 4-hydroxy-tetrahydrodipicolinate (HTPA) to tetrahydrodipicolinate.</text>
</comment>
<comment type="catalytic activity">
    <reaction evidence="1">
        <text>(S)-2,3,4,5-tetrahydrodipicolinate + NAD(+) + H2O = (2S,4S)-4-hydroxy-2,3,4,5-tetrahydrodipicolinate + NADH + H(+)</text>
        <dbReference type="Rhea" id="RHEA:35323"/>
        <dbReference type="ChEBI" id="CHEBI:15377"/>
        <dbReference type="ChEBI" id="CHEBI:15378"/>
        <dbReference type="ChEBI" id="CHEBI:16845"/>
        <dbReference type="ChEBI" id="CHEBI:57540"/>
        <dbReference type="ChEBI" id="CHEBI:57945"/>
        <dbReference type="ChEBI" id="CHEBI:67139"/>
        <dbReference type="EC" id="1.17.1.8"/>
    </reaction>
</comment>
<comment type="catalytic activity">
    <reaction evidence="1">
        <text>(S)-2,3,4,5-tetrahydrodipicolinate + NADP(+) + H2O = (2S,4S)-4-hydroxy-2,3,4,5-tetrahydrodipicolinate + NADPH + H(+)</text>
        <dbReference type="Rhea" id="RHEA:35331"/>
        <dbReference type="ChEBI" id="CHEBI:15377"/>
        <dbReference type="ChEBI" id="CHEBI:15378"/>
        <dbReference type="ChEBI" id="CHEBI:16845"/>
        <dbReference type="ChEBI" id="CHEBI:57783"/>
        <dbReference type="ChEBI" id="CHEBI:58349"/>
        <dbReference type="ChEBI" id="CHEBI:67139"/>
        <dbReference type="EC" id="1.17.1.8"/>
    </reaction>
</comment>
<comment type="pathway">
    <text evidence="1">Amino-acid biosynthesis; L-lysine biosynthesis via DAP pathway; (S)-tetrahydrodipicolinate from L-aspartate: step 4/4.</text>
</comment>
<comment type="subcellular location">
    <subcellularLocation>
        <location evidence="1">Cytoplasm</location>
    </subcellularLocation>
</comment>
<comment type="similarity">
    <text evidence="1">Belongs to the DapB family.</text>
</comment>
<comment type="caution">
    <text evidence="2">Was originally thought to be a dihydrodipicolinate reductase (DHDPR), catalyzing the conversion of dihydrodipicolinate to tetrahydrodipicolinate. However, it was shown in E.coli that the substrate of the enzymatic reaction is not dihydrodipicolinate (DHDP) but in fact (2S,4S)-4-hydroxy-2,3,4,5-tetrahydrodipicolinic acid (HTPA), the product released by the DapA-catalyzed reaction.</text>
</comment>
<organism>
    <name type="scientific">Acaryochloris marina (strain MBIC 11017)</name>
    <dbReference type="NCBI Taxonomy" id="329726"/>
    <lineage>
        <taxon>Bacteria</taxon>
        <taxon>Bacillati</taxon>
        <taxon>Cyanobacteriota</taxon>
        <taxon>Cyanophyceae</taxon>
        <taxon>Acaryochloridales</taxon>
        <taxon>Acaryochloridaceae</taxon>
        <taxon>Acaryochloris</taxon>
    </lineage>
</organism>
<keyword id="KW-0028">Amino-acid biosynthesis</keyword>
<keyword id="KW-0963">Cytoplasm</keyword>
<keyword id="KW-0220">Diaminopimelate biosynthesis</keyword>
<keyword id="KW-0457">Lysine biosynthesis</keyword>
<keyword id="KW-0520">NAD</keyword>
<keyword id="KW-0521">NADP</keyword>
<keyword id="KW-0560">Oxidoreductase</keyword>
<keyword id="KW-1185">Reference proteome</keyword>
<proteinExistence type="inferred from homology"/>
<evidence type="ECO:0000255" key="1">
    <source>
        <dbReference type="HAMAP-Rule" id="MF_00102"/>
    </source>
</evidence>
<evidence type="ECO:0000305" key="2"/>
<protein>
    <recommendedName>
        <fullName evidence="1">4-hydroxy-tetrahydrodipicolinate reductase</fullName>
        <shortName evidence="1">HTPA reductase</shortName>
        <ecNumber evidence="1">1.17.1.8</ecNumber>
    </recommendedName>
</protein>
<name>DAPB_ACAM1</name>
<dbReference type="EC" id="1.17.1.8" evidence="1"/>
<dbReference type="EMBL" id="CP000828">
    <property type="protein sequence ID" value="ABW30505.1"/>
    <property type="molecule type" value="Genomic_DNA"/>
</dbReference>
<dbReference type="RefSeq" id="WP_012165730.1">
    <property type="nucleotide sequence ID" value="NC_009925.1"/>
</dbReference>
<dbReference type="SMR" id="B0CE31"/>
<dbReference type="STRING" id="329726.AM1_5551"/>
<dbReference type="KEGG" id="amr:AM1_5551"/>
<dbReference type="eggNOG" id="COG0289">
    <property type="taxonomic scope" value="Bacteria"/>
</dbReference>
<dbReference type="HOGENOM" id="CLU_047479_0_0_3"/>
<dbReference type="OrthoDB" id="9790352at2"/>
<dbReference type="UniPathway" id="UPA00034">
    <property type="reaction ID" value="UER00018"/>
</dbReference>
<dbReference type="Proteomes" id="UP000000268">
    <property type="component" value="Chromosome"/>
</dbReference>
<dbReference type="GO" id="GO:0005829">
    <property type="term" value="C:cytosol"/>
    <property type="evidence" value="ECO:0007669"/>
    <property type="project" value="TreeGrafter"/>
</dbReference>
<dbReference type="GO" id="GO:0008839">
    <property type="term" value="F:4-hydroxy-tetrahydrodipicolinate reductase"/>
    <property type="evidence" value="ECO:0007669"/>
    <property type="project" value="UniProtKB-EC"/>
</dbReference>
<dbReference type="GO" id="GO:0051287">
    <property type="term" value="F:NAD binding"/>
    <property type="evidence" value="ECO:0007669"/>
    <property type="project" value="UniProtKB-UniRule"/>
</dbReference>
<dbReference type="GO" id="GO:0050661">
    <property type="term" value="F:NADP binding"/>
    <property type="evidence" value="ECO:0007669"/>
    <property type="project" value="UniProtKB-UniRule"/>
</dbReference>
<dbReference type="GO" id="GO:0016726">
    <property type="term" value="F:oxidoreductase activity, acting on CH or CH2 groups, NAD or NADP as acceptor"/>
    <property type="evidence" value="ECO:0007669"/>
    <property type="project" value="UniProtKB-UniRule"/>
</dbReference>
<dbReference type="GO" id="GO:0019877">
    <property type="term" value="P:diaminopimelate biosynthetic process"/>
    <property type="evidence" value="ECO:0007669"/>
    <property type="project" value="UniProtKB-UniRule"/>
</dbReference>
<dbReference type="GO" id="GO:0009089">
    <property type="term" value="P:lysine biosynthetic process via diaminopimelate"/>
    <property type="evidence" value="ECO:0007669"/>
    <property type="project" value="UniProtKB-UniRule"/>
</dbReference>
<dbReference type="CDD" id="cd02274">
    <property type="entry name" value="DHDPR_N"/>
    <property type="match status" value="1"/>
</dbReference>
<dbReference type="FunFam" id="3.30.360.10:FF:000009">
    <property type="entry name" value="4-hydroxy-tetrahydrodipicolinate reductase"/>
    <property type="match status" value="1"/>
</dbReference>
<dbReference type="Gene3D" id="3.30.360.10">
    <property type="entry name" value="Dihydrodipicolinate Reductase, domain 2"/>
    <property type="match status" value="1"/>
</dbReference>
<dbReference type="Gene3D" id="3.40.50.720">
    <property type="entry name" value="NAD(P)-binding Rossmann-like Domain"/>
    <property type="match status" value="1"/>
</dbReference>
<dbReference type="HAMAP" id="MF_00102">
    <property type="entry name" value="DapB"/>
    <property type="match status" value="1"/>
</dbReference>
<dbReference type="InterPro" id="IPR022663">
    <property type="entry name" value="DapB_C"/>
</dbReference>
<dbReference type="InterPro" id="IPR000846">
    <property type="entry name" value="DapB_N"/>
</dbReference>
<dbReference type="InterPro" id="IPR022664">
    <property type="entry name" value="DapB_N_CS"/>
</dbReference>
<dbReference type="InterPro" id="IPR023940">
    <property type="entry name" value="DHDPR_bac"/>
</dbReference>
<dbReference type="InterPro" id="IPR036291">
    <property type="entry name" value="NAD(P)-bd_dom_sf"/>
</dbReference>
<dbReference type="NCBIfam" id="TIGR00036">
    <property type="entry name" value="dapB"/>
    <property type="match status" value="1"/>
</dbReference>
<dbReference type="PANTHER" id="PTHR20836:SF0">
    <property type="entry name" value="4-HYDROXY-TETRAHYDRODIPICOLINATE REDUCTASE 1, CHLOROPLASTIC-RELATED"/>
    <property type="match status" value="1"/>
</dbReference>
<dbReference type="PANTHER" id="PTHR20836">
    <property type="entry name" value="DIHYDRODIPICOLINATE REDUCTASE"/>
    <property type="match status" value="1"/>
</dbReference>
<dbReference type="Pfam" id="PF05173">
    <property type="entry name" value="DapB_C"/>
    <property type="match status" value="1"/>
</dbReference>
<dbReference type="Pfam" id="PF01113">
    <property type="entry name" value="DapB_N"/>
    <property type="match status" value="1"/>
</dbReference>
<dbReference type="PIRSF" id="PIRSF000161">
    <property type="entry name" value="DHPR"/>
    <property type="match status" value="1"/>
</dbReference>
<dbReference type="SUPFAM" id="SSF55347">
    <property type="entry name" value="Glyceraldehyde-3-phosphate dehydrogenase-like, C-terminal domain"/>
    <property type="match status" value="1"/>
</dbReference>
<dbReference type="SUPFAM" id="SSF51735">
    <property type="entry name" value="NAD(P)-binding Rossmann-fold domains"/>
    <property type="match status" value="1"/>
</dbReference>
<dbReference type="PROSITE" id="PS01298">
    <property type="entry name" value="DAPB"/>
    <property type="match status" value="1"/>
</dbReference>
<sequence length="275" mass="29639">MTNATPTPVIVTGAAGKMGREVIKAVVQADDLRLYAAVDRNPDVFSLDAGELVGLDTLNIELTNELEPVLAAAAQEKQPCVMVDFTHPSSVYSNIRSAIAYGVFPVIGTTGLSDEQMNDLTEFTEKASMGCLVIPNFSIGMVLLQQAAVQASQYFDHVEIIELHHNQKADAPSGTAVKTAQLLGDLGKTYNPALVEEKEHLAGARGSLGSENIRIHSIRLPGLIAHQEVLFGAPGQLYTLRHDTSDRACYMPGVLLSIRKVTQLQTLSYGLEKIL</sequence>
<feature type="chain" id="PRO_1000075669" description="4-hydroxy-tetrahydrodipicolinate reductase">
    <location>
        <begin position="1"/>
        <end position="275"/>
    </location>
</feature>
<feature type="active site" description="Proton donor/acceptor" evidence="1">
    <location>
        <position position="164"/>
    </location>
</feature>
<feature type="active site" description="Proton donor" evidence="1">
    <location>
        <position position="168"/>
    </location>
</feature>
<feature type="binding site" evidence="1">
    <location>
        <begin position="13"/>
        <end position="18"/>
    </location>
    <ligand>
        <name>NAD(+)</name>
        <dbReference type="ChEBI" id="CHEBI:57540"/>
    </ligand>
</feature>
<feature type="binding site" evidence="1">
    <location>
        <begin position="108"/>
        <end position="110"/>
    </location>
    <ligand>
        <name>NAD(+)</name>
        <dbReference type="ChEBI" id="CHEBI:57540"/>
    </ligand>
</feature>
<feature type="binding site" evidence="1">
    <location>
        <position position="165"/>
    </location>
    <ligand>
        <name>(S)-2,3,4,5-tetrahydrodipicolinate</name>
        <dbReference type="ChEBI" id="CHEBI:16845"/>
    </ligand>
</feature>
<feature type="binding site" evidence="1">
    <location>
        <begin position="174"/>
        <end position="175"/>
    </location>
    <ligand>
        <name>(S)-2,3,4,5-tetrahydrodipicolinate</name>
        <dbReference type="ChEBI" id="CHEBI:16845"/>
    </ligand>
</feature>
<gene>
    <name evidence="1" type="primary">dapB</name>
    <name type="ordered locus">AM1_5551</name>
</gene>